<reference key="1">
    <citation type="journal article" date="1992" name="Biochim. Biophys. Acta">
        <title>Nucleotide sequence of hamster S-adenosylmethionine decarboxylase cDNA.</title>
        <authorList>
            <person name="Tekwani B.L."/>
            <person name="Stanley B.A."/>
            <person name="Pegg A.E."/>
        </authorList>
    </citation>
    <scope>NUCLEOTIDE SEQUENCE [MRNA]</scope>
    <source>
        <tissue>Liver</tissue>
    </source>
</reference>
<name>DCAM_MESAU</name>
<dbReference type="EC" id="4.1.1.50" evidence="3"/>
<dbReference type="EMBL" id="X63861">
    <property type="protein sequence ID" value="CAA45343.1"/>
    <property type="molecule type" value="mRNA"/>
</dbReference>
<dbReference type="PIR" id="S22358">
    <property type="entry name" value="DCHYDM"/>
</dbReference>
<dbReference type="RefSeq" id="NP_001268579.1">
    <property type="nucleotide sequence ID" value="NM_001281650.1"/>
</dbReference>
<dbReference type="SMR" id="P28918"/>
<dbReference type="STRING" id="10036.ENSMAUP00000013384"/>
<dbReference type="Ensembl" id="ENSMAUT00000017295">
    <property type="protein sequence ID" value="ENSMAUP00000013384"/>
    <property type="gene ID" value="ENSMAUG00000013445"/>
</dbReference>
<dbReference type="GeneID" id="101832367"/>
<dbReference type="KEGG" id="maua:101832367"/>
<dbReference type="CTD" id="262"/>
<dbReference type="eggNOG" id="KOG0788">
    <property type="taxonomic scope" value="Eukaryota"/>
</dbReference>
<dbReference type="OrthoDB" id="1068353at2759"/>
<dbReference type="UniPathway" id="UPA00331">
    <property type="reaction ID" value="UER00451"/>
</dbReference>
<dbReference type="Proteomes" id="UP000189706">
    <property type="component" value="Unplaced"/>
</dbReference>
<dbReference type="GO" id="GO:0005829">
    <property type="term" value="C:cytosol"/>
    <property type="evidence" value="ECO:0007669"/>
    <property type="project" value="TreeGrafter"/>
</dbReference>
<dbReference type="GO" id="GO:0004014">
    <property type="term" value="F:adenosylmethionine decarboxylase activity"/>
    <property type="evidence" value="ECO:0007669"/>
    <property type="project" value="UniProtKB-EC"/>
</dbReference>
<dbReference type="GO" id="GO:0019810">
    <property type="term" value="F:putrescine binding"/>
    <property type="evidence" value="ECO:0007669"/>
    <property type="project" value="TreeGrafter"/>
</dbReference>
<dbReference type="GO" id="GO:0008295">
    <property type="term" value="P:spermidine biosynthetic process"/>
    <property type="evidence" value="ECO:0007669"/>
    <property type="project" value="UniProtKB-KW"/>
</dbReference>
<dbReference type="GO" id="GO:0006597">
    <property type="term" value="P:spermine biosynthetic process"/>
    <property type="evidence" value="ECO:0007669"/>
    <property type="project" value="InterPro"/>
</dbReference>
<dbReference type="FunFam" id="3.60.90.10:FF:000003">
    <property type="entry name" value="S-adenosylmethionine decarboxylase proenzyme"/>
    <property type="match status" value="1"/>
</dbReference>
<dbReference type="FunFam" id="3.30.360.50:FF:000003">
    <property type="entry name" value="S-adenosylmethionine decarboxylase proenzyme isoform X2"/>
    <property type="match status" value="1"/>
</dbReference>
<dbReference type="Gene3D" id="3.60.90.10">
    <property type="entry name" value="S-adenosylmethionine decarboxylase"/>
    <property type="match status" value="1"/>
</dbReference>
<dbReference type="InterPro" id="IPR048283">
    <property type="entry name" value="AdoMetDC-like"/>
</dbReference>
<dbReference type="InterPro" id="IPR001985">
    <property type="entry name" value="S-AdoMet_decarboxylase_euk"/>
</dbReference>
<dbReference type="InterPro" id="IPR016067">
    <property type="entry name" value="S-AdoMet_deCO2ase_core"/>
</dbReference>
<dbReference type="InterPro" id="IPR018166">
    <property type="entry name" value="S-AdoMet_deCO2ase_CS"/>
</dbReference>
<dbReference type="NCBIfam" id="TIGR00535">
    <property type="entry name" value="SAM_DCase"/>
    <property type="match status" value="1"/>
</dbReference>
<dbReference type="PANTHER" id="PTHR11570">
    <property type="entry name" value="S-ADENOSYLMETHIONINE DECARBOXYLASE"/>
    <property type="match status" value="1"/>
</dbReference>
<dbReference type="PANTHER" id="PTHR11570:SF0">
    <property type="entry name" value="S-ADENOSYLMETHIONINE DECARBOXYLASE PROENZYME"/>
    <property type="match status" value="1"/>
</dbReference>
<dbReference type="Pfam" id="PF01536">
    <property type="entry name" value="SAM_decarbox"/>
    <property type="match status" value="1"/>
</dbReference>
<dbReference type="PIRSF" id="PIRSF001355">
    <property type="entry name" value="S-AdenosylMet_decarboxylase"/>
    <property type="match status" value="1"/>
</dbReference>
<dbReference type="SUPFAM" id="SSF56276">
    <property type="entry name" value="S-adenosylmethionine decarboxylase"/>
    <property type="match status" value="1"/>
</dbReference>
<dbReference type="PROSITE" id="PS01336">
    <property type="entry name" value="ADOMETDC"/>
    <property type="match status" value="1"/>
</dbReference>
<gene>
    <name type="primary">AMD1</name>
</gene>
<proteinExistence type="evidence at transcript level"/>
<organism>
    <name type="scientific">Mesocricetus auratus</name>
    <name type="common">Golden hamster</name>
    <dbReference type="NCBI Taxonomy" id="10036"/>
    <lineage>
        <taxon>Eukaryota</taxon>
        <taxon>Metazoa</taxon>
        <taxon>Chordata</taxon>
        <taxon>Craniata</taxon>
        <taxon>Vertebrata</taxon>
        <taxon>Euteleostomi</taxon>
        <taxon>Mammalia</taxon>
        <taxon>Eutheria</taxon>
        <taxon>Euarchontoglires</taxon>
        <taxon>Glires</taxon>
        <taxon>Rodentia</taxon>
        <taxon>Myomorpha</taxon>
        <taxon>Muroidea</taxon>
        <taxon>Cricetidae</taxon>
        <taxon>Cricetinae</taxon>
        <taxon>Mesocricetus</taxon>
    </lineage>
</organism>
<comment type="function">
    <text evidence="2">Essential for biosynthesis of the polyamines spermidine and spermine. Promotes maintenance and self-renewal of embryonic stem cells, by maintaining spermine levels.</text>
</comment>
<comment type="catalytic activity">
    <reaction evidence="3">
        <text>S-adenosyl-L-methionine + H(+) = S-adenosyl 3-(methylsulfanyl)propylamine + CO2</text>
        <dbReference type="Rhea" id="RHEA:15981"/>
        <dbReference type="ChEBI" id="CHEBI:15378"/>
        <dbReference type="ChEBI" id="CHEBI:16526"/>
        <dbReference type="ChEBI" id="CHEBI:57443"/>
        <dbReference type="ChEBI" id="CHEBI:59789"/>
        <dbReference type="EC" id="4.1.1.50"/>
    </reaction>
</comment>
<comment type="cofactor">
    <cofactor>
        <name>pyruvate</name>
        <dbReference type="ChEBI" id="CHEBI:15361"/>
    </cofactor>
    <text>Binds 1 pyruvoyl group covalently per subunit.</text>
</comment>
<comment type="pathway">
    <text>Amine and polyamine biosynthesis; S-adenosylmethioninamine biosynthesis; S-adenosylmethioninamine from S-adenosyl-L-methionine: step 1/1.</text>
</comment>
<comment type="subunit">
    <text evidence="1">Heterotetramer of two alpha and two beta chains.</text>
</comment>
<comment type="PTM">
    <text evidence="3">Is synthesized initially as an inactive proenzyme. Formation of the active enzyme involves a self-maturation process in which the active site pyruvoyl group is generated from an internal serine residue via an autocatalytic post-translational modification. Two non-identical subunits are generated from the proenzyme in this reaction, and the pyruvate is formed at the N-terminus of the alpha chain, which is derived from the carboxyl end of the proenzyme. The post-translation cleavage follows an unusual pathway, termed non-hydrolytic serinolysis, in which the side chain hydroxyl group of the serine supplies its oxygen atom to form the C-terminus of the beta chain, while the remainder of the serine residue undergoes an oxidative deamination to produce ammonia and the pyruvoyl group blocking the N-terminus of the alpha chain.</text>
</comment>
<comment type="similarity">
    <text evidence="4">Belongs to the eukaryotic AdoMetDC family.</text>
</comment>
<protein>
    <recommendedName>
        <fullName>S-adenosylmethionine decarboxylase proenzyme</fullName>
        <shortName>AdoMetDC</shortName>
        <shortName>SAMDC</shortName>
        <ecNumber evidence="3">4.1.1.50</ecNumber>
    </recommendedName>
    <component>
        <recommendedName>
            <fullName>S-adenosylmethionine decarboxylase alpha chain</fullName>
        </recommendedName>
    </component>
    <component>
        <recommendedName>
            <fullName>S-adenosylmethionine decarboxylase beta chain</fullName>
        </recommendedName>
    </component>
</protein>
<sequence>MEAAHFFEGTEKLLEVWFSRQQSDASQGSGDLRTIPRSEWDVLLKDVQCSIISVTKTDKQEAYVLSESSMFVSKRRFILKTCGTTLLLKALVPLLKLARDYSGFDSIQSFFYSRKNFMKPSHQGYPHRNFQEEIEFLNAIFPNGAAYCMGRMNSDCWYLYTLDFPESRVINQPDQTLEILMSELDPAVMDQFYMKDGVTAKDVTRESGIRDLIPGSVIDATLFNPCGYSMNGMKSDGTYWTIHITPEPEFSYVSFETNLSQTSYDDLIRKVVEVFKPGKFVTTLFVNQSSKCRTVLSSPQKIEGFKRLDCQSAMFNDYNFVFTSFAKKQQQQQS</sequence>
<keyword id="KW-0068">Autocatalytic cleavage</keyword>
<keyword id="KW-0210">Decarboxylase</keyword>
<keyword id="KW-0456">Lyase</keyword>
<keyword id="KW-0597">Phosphoprotein</keyword>
<keyword id="KW-0620">Polyamine biosynthesis</keyword>
<keyword id="KW-0670">Pyruvate</keyword>
<keyword id="KW-1185">Reference proteome</keyword>
<keyword id="KW-0949">S-adenosyl-L-methionine</keyword>
<keyword id="KW-0704">Schiff base</keyword>
<keyword id="KW-0745">Spermidine biosynthesis</keyword>
<keyword id="KW-0865">Zymogen</keyword>
<feature type="chain" id="PRO_0000029961" description="S-adenosylmethionine decarboxylase beta chain">
    <location>
        <begin position="1"/>
        <end position="67"/>
    </location>
</feature>
<feature type="chain" id="PRO_0000029962" description="S-adenosylmethionine decarboxylase alpha chain">
    <location>
        <begin position="68"/>
        <end position="334"/>
    </location>
</feature>
<feature type="active site" evidence="3">
    <location>
        <position position="8"/>
    </location>
</feature>
<feature type="active site" evidence="3">
    <location>
        <position position="11"/>
    </location>
</feature>
<feature type="active site" description="Schiff-base intermediate with substrate; via pyruvic acid" evidence="3">
    <location>
        <position position="68"/>
    </location>
</feature>
<feature type="active site" description="Proton donor; for catalytic activity" evidence="3">
    <location>
        <position position="82"/>
    </location>
</feature>
<feature type="active site" description="Proton acceptor; for processing activity" evidence="3">
    <location>
        <position position="229"/>
    </location>
</feature>
<feature type="active site" description="Proton acceptor; for processing activity" evidence="3">
    <location>
        <position position="243"/>
    </location>
</feature>
<feature type="binding site" evidence="3">
    <location>
        <position position="7"/>
    </location>
    <ligand>
        <name>substrate</name>
    </ligand>
</feature>
<feature type="binding site" evidence="3">
    <location>
        <position position="67"/>
    </location>
    <ligand>
        <name>substrate</name>
    </ligand>
</feature>
<feature type="binding site" evidence="3">
    <location>
        <position position="223"/>
    </location>
    <ligand>
        <name>substrate</name>
    </ligand>
</feature>
<feature type="binding site" evidence="3">
    <location>
        <position position="247"/>
    </location>
    <ligand>
        <name>substrate</name>
    </ligand>
</feature>
<feature type="site" description="Cleavage (non-hydrolytic); by autolysis" evidence="3">
    <location>
        <begin position="67"/>
        <end position="68"/>
    </location>
</feature>
<feature type="modified residue" description="Pyruvic acid (Ser); by autocatalysis" evidence="3">
    <location>
        <position position="68"/>
    </location>
</feature>
<feature type="modified residue" description="Phosphoserine" evidence="3">
    <location>
        <position position="298"/>
    </location>
</feature>
<accession>P28918</accession>
<evidence type="ECO:0000250" key="1"/>
<evidence type="ECO:0000250" key="2">
    <source>
        <dbReference type="UniProtKB" id="P0DMN7"/>
    </source>
</evidence>
<evidence type="ECO:0000250" key="3">
    <source>
        <dbReference type="UniProtKB" id="P17707"/>
    </source>
</evidence>
<evidence type="ECO:0000305" key="4"/>